<feature type="chain" id="PRO_0000389613" description="Serine/threonine-protein kinase sax-1">
    <location>
        <begin position="1"/>
        <end position="476"/>
    </location>
</feature>
<feature type="domain" description="Protein kinase" evidence="4">
    <location>
        <begin position="87"/>
        <end position="381"/>
    </location>
</feature>
<feature type="domain" description="AGC-kinase C-terminal" evidence="5">
    <location>
        <begin position="382"/>
        <end position="452"/>
    </location>
</feature>
<feature type="active site" description="Proton acceptor" evidence="1 4 6">
    <location>
        <position position="210"/>
    </location>
</feature>
<feature type="binding site" evidence="1 4">
    <location>
        <begin position="93"/>
        <end position="101"/>
    </location>
    <ligand>
        <name>ATP</name>
        <dbReference type="ChEBI" id="CHEBI:30616"/>
    </ligand>
</feature>
<feature type="binding site" evidence="1 4">
    <location>
        <position position="116"/>
    </location>
    <ligand>
        <name>ATP</name>
        <dbReference type="ChEBI" id="CHEBI:30616"/>
    </ligand>
</feature>
<feature type="splice variant" id="VSP_053167" description="In isoform b." evidence="13 14">
    <location>
        <begin position="460"/>
        <end position="461"/>
    </location>
</feature>
<feature type="sequence conflict" description="In Ref. 3; CAA84441." evidence="15" ref="3">
    <original>E</original>
    <variation>R</variation>
    <location>
        <position position="59"/>
    </location>
</feature>
<feature type="sequence conflict" description="In Ref. 3; CAA84441." evidence="15" ref="3">
    <original>T</original>
    <variation>M</variation>
    <location>
        <position position="280"/>
    </location>
</feature>
<feature type="sequence conflict" description="In Ref. 3; CAA84441." evidence="15" ref="3">
    <original>A</original>
    <variation>R</variation>
    <location>
        <position position="362"/>
    </location>
</feature>
<organism>
    <name type="scientific">Caenorhabditis elegans</name>
    <dbReference type="NCBI Taxonomy" id="6239"/>
    <lineage>
        <taxon>Eukaryota</taxon>
        <taxon>Metazoa</taxon>
        <taxon>Ecdysozoa</taxon>
        <taxon>Nematoda</taxon>
        <taxon>Chromadorea</taxon>
        <taxon>Rhabditida</taxon>
        <taxon>Rhabditina</taxon>
        <taxon>Rhabditomorpha</taxon>
        <taxon>Rhabditoidea</taxon>
        <taxon>Rhabditidae</taxon>
        <taxon>Peloderinae</taxon>
        <taxon>Caenorhabditis</taxon>
    </lineage>
</organism>
<gene>
    <name evidence="18" type="primary">sax-1</name>
    <name type="ORF">R11G1.4</name>
</gene>
<keyword id="KW-0025">Alternative splicing</keyword>
<keyword id="KW-0067">ATP-binding</keyword>
<keyword id="KW-0963">Cytoplasm</keyword>
<keyword id="KW-0217">Developmental protein</keyword>
<keyword id="KW-0418">Kinase</keyword>
<keyword id="KW-0460">Magnesium</keyword>
<keyword id="KW-0479">Metal-binding</keyword>
<keyword id="KW-0524">Neurogenesis</keyword>
<keyword id="KW-0547">Nucleotide-binding</keyword>
<keyword id="KW-0539">Nucleus</keyword>
<keyword id="KW-0597">Phosphoprotein</keyword>
<keyword id="KW-1185">Reference proteome</keyword>
<keyword id="KW-0723">Serine/threonine-protein kinase</keyword>
<keyword id="KW-0808">Transferase</keyword>
<evidence type="ECO:0000250" key="1">
    <source>
        <dbReference type="UniProtKB" id="P28523"/>
    </source>
</evidence>
<evidence type="ECO:0000250" key="2">
    <source>
        <dbReference type="UniProtKB" id="Q9Y2H1"/>
    </source>
</evidence>
<evidence type="ECO:0000255" key="3"/>
<evidence type="ECO:0000255" key="4">
    <source>
        <dbReference type="PROSITE-ProRule" id="PRU00159"/>
    </source>
</evidence>
<evidence type="ECO:0000255" key="5">
    <source>
        <dbReference type="PROSITE-ProRule" id="PRU00618"/>
    </source>
</evidence>
<evidence type="ECO:0000255" key="6">
    <source>
        <dbReference type="PROSITE-ProRule" id="PRU10027"/>
    </source>
</evidence>
<evidence type="ECO:0000269" key="7">
    <source>
    </source>
</evidence>
<evidence type="ECO:0000269" key="8">
    <source>
    </source>
</evidence>
<evidence type="ECO:0000269" key="9">
    <source>
    </source>
</evidence>
<evidence type="ECO:0000269" key="10">
    <source>
    </source>
</evidence>
<evidence type="ECO:0000269" key="11">
    <source>
    </source>
</evidence>
<evidence type="ECO:0000303" key="12">
    <source>
    </source>
</evidence>
<evidence type="ECO:0000303" key="13">
    <source>
    </source>
</evidence>
<evidence type="ECO:0000303" key="14">
    <source>
    </source>
</evidence>
<evidence type="ECO:0000305" key="15"/>
<evidence type="ECO:0000312" key="16">
    <source>
        <dbReference type="EMBL" id="AAF91417.1"/>
    </source>
</evidence>
<evidence type="ECO:0000312" key="17">
    <source>
        <dbReference type="EMBL" id="CAA84441.1"/>
    </source>
</evidence>
<evidence type="ECO:0000312" key="18">
    <source>
        <dbReference type="WormBase" id="R11G1.4a"/>
    </source>
</evidence>
<proteinExistence type="evidence at transcript level"/>
<accession>Q2L6W9</accession>
<accession>Q21613</accession>
<accession>Q21946</accession>
<accession>Q2L6X0</accession>
<accession>Q9NB00</accession>
<sequence>MGEIAPEMEISQYTKDKASCTRISIESYYSKRVTQCAERENRLKKLEEDISARGLSDEEKEEKRKIHHSKETDYLRLKRTRLTVNDFESLKVIGRGAFGEVRLVQKHDTGHIYAMKILRKSEMVEKEQTAHVRAERDILSEADCDWVVKMYYSFQDYSNLYLVMEFLPGGDMMTLLIKKDTLTEEATQFYIAEAALAIQFIHSLGFIHRDIKPDNLLLDARGHVKLSDFGLCTGLKKFHRTDHYRNWPSTLPPDFISKPFESKRKAETWKRNRRAYAYSTVGTPDYIAPEVFQPNGYTKSCDWWSLGVIMYEMLIGYPPFCSELPQETYRKVINWQQTLVFPSDVPISIEAKATIKRFCCEAERRLGNHGGLDEIKQCPFVKRIDWNHIRERPPPIRVTVKSIDDTSNFDDFPDEDLTWPTSTLIRPEEQPGRRGEFVDFTYKRFDGLTQKMRYSDLKKFQQAKKNKKGGQQGTSD</sequence>
<reference evidence="15" key="1">
    <citation type="journal article" date="1998" name="Science">
        <title>Genome sequence of the nematode C. elegans: a platform for investigating biology.</title>
        <authorList>
            <consortium name="The C. elegans sequencing consortium"/>
        </authorList>
    </citation>
    <scope>NUCLEOTIDE SEQUENCE [LARGE SCALE GENOMIC DNA]</scope>
    <scope>ALTERNATIVE SPLICING</scope>
    <source>
        <strain>Bristol N2</strain>
    </source>
</reference>
<reference evidence="15 16" key="2">
    <citation type="journal article" date="2000" name="Mol. Biol. Cell">
        <title>Neuronal cell shape and neurite initiation are regulated by the Ndr kinase SAX-1, a member of the Orb6/COT-1/warts serine/threonine kinase family.</title>
        <authorList>
            <person name="Zallen J.A."/>
            <person name="Peckol E.L."/>
            <person name="Tobin D.M."/>
            <person name="Bargmann C.I."/>
        </authorList>
    </citation>
    <scope>NUCLEOTIDE SEQUENCE [MRNA] OF 8-476 (ISOFORM A)</scope>
    <scope>FUNCTION</scope>
    <scope>SUBCELLULAR LOCATION</scope>
    <scope>TISSUE SPECIFICITY</scope>
    <scope>DISRUPTION PHENOTYPE</scope>
    <source>
        <strain evidence="16">Bristol N2</strain>
    </source>
</reference>
<reference evidence="15 17" key="3">
    <citation type="journal article" date="1995" name="Proc. Natl. Acad. Sci. U.S.A.">
        <title>Molecular cloning and characterization of a conserved nuclear serine/threonine protein kinase.</title>
        <authorList>
            <person name="Millward T.A."/>
            <person name="Cron P."/>
            <person name="Hemmings B.A."/>
        </authorList>
    </citation>
    <scope>NUCLEOTIDE SEQUENCE [MRNA] OF 59-464 (ISOFORM B)</scope>
    <source>
        <strain evidence="17">Bristol N2</strain>
    </source>
</reference>
<reference evidence="15" key="4">
    <citation type="journal article" date="1999" name="Development">
        <title>Genes required for axon pathfinding and extension in the C. elegans nerve ring.</title>
        <authorList>
            <person name="Zallen J.A."/>
            <person name="Kirch S.A."/>
            <person name="Bargmann C.I."/>
        </authorList>
    </citation>
    <scope>DISRUPTION PHENOTYPE</scope>
</reference>
<reference evidence="15" key="5">
    <citation type="journal article" date="2004" name="Neuron">
        <title>Mechanosensory neurite termination and tiling depend on SAX-2 and the SAX-1 kinase.</title>
        <authorList>
            <person name="Gallegos M.E."/>
            <person name="Bargmann C.I."/>
        </authorList>
    </citation>
    <scope>FUNCTION</scope>
    <scope>DISRUPTION PHENOTYPE</scope>
</reference>
<name>SAX1_CAEEL</name>
<protein>
    <recommendedName>
        <fullName evidence="12">Serine/threonine-protein kinase sax-1</fullName>
        <ecNumber>2.7.11.1</ecNumber>
    </recommendedName>
    <alternativeName>
        <fullName evidence="2 12">NDR protein kinase</fullName>
    </alternativeName>
    <alternativeName>
        <fullName>Sensory axon guidance protein 1</fullName>
    </alternativeName>
</protein>
<comment type="function">
    <text evidence="8 9">Acts with sax-2 to restrict the growth of both primary and secondary neurites. Regulates mechanosensory tiling by controlling the termination point of sensory dendrites.</text>
</comment>
<comment type="catalytic activity">
    <reaction evidence="2">
        <text>L-seryl-[protein] + ATP = O-phospho-L-seryl-[protein] + ADP + H(+)</text>
        <dbReference type="Rhea" id="RHEA:17989"/>
        <dbReference type="Rhea" id="RHEA-COMP:9863"/>
        <dbReference type="Rhea" id="RHEA-COMP:11604"/>
        <dbReference type="ChEBI" id="CHEBI:15378"/>
        <dbReference type="ChEBI" id="CHEBI:29999"/>
        <dbReference type="ChEBI" id="CHEBI:30616"/>
        <dbReference type="ChEBI" id="CHEBI:83421"/>
        <dbReference type="ChEBI" id="CHEBI:456216"/>
        <dbReference type="EC" id="2.7.11.1"/>
    </reaction>
</comment>
<comment type="catalytic activity">
    <reaction evidence="2">
        <text>L-threonyl-[protein] + ATP = O-phospho-L-threonyl-[protein] + ADP + H(+)</text>
        <dbReference type="Rhea" id="RHEA:46608"/>
        <dbReference type="Rhea" id="RHEA-COMP:11060"/>
        <dbReference type="Rhea" id="RHEA-COMP:11605"/>
        <dbReference type="ChEBI" id="CHEBI:15378"/>
        <dbReference type="ChEBI" id="CHEBI:30013"/>
        <dbReference type="ChEBI" id="CHEBI:30616"/>
        <dbReference type="ChEBI" id="CHEBI:61977"/>
        <dbReference type="ChEBI" id="CHEBI:456216"/>
        <dbReference type="EC" id="2.7.11.1"/>
    </reaction>
</comment>
<comment type="cofactor">
    <cofactor evidence="2">
        <name>Mg(2+)</name>
        <dbReference type="ChEBI" id="CHEBI:18420"/>
    </cofactor>
</comment>
<comment type="subcellular location">
    <subcellularLocation>
        <location evidence="8">Cytoplasm</location>
    </subcellularLocation>
    <subcellularLocation>
        <location evidence="8">Nucleus</location>
    </subcellularLocation>
</comment>
<comment type="alternative products">
    <event type="alternative splicing"/>
    <isoform>
        <id>Q2L6W9-1</id>
        <name evidence="8 11">a</name>
        <sequence type="displayed"/>
    </isoform>
    <isoform>
        <id>Q2L6W9-2</id>
        <name evidence="10 11">b</name>
        <sequence type="described" ref="VSP_053167"/>
    </isoform>
</comment>
<comment type="tissue specificity">
    <text evidence="8">Widely expressed in embryonic and larval neurons that contribute axons to the nerve ring and in hypodermal cells, including lateral seam cells. Also displays a punctate localization in muscle.</text>
</comment>
<comment type="disruption phenotype">
    <text evidence="7 8 9">Expanded cell bodies and ectopic neurites in many classes of neurons. Overlap of anterior lateral microtubule (ALM) and posterior lateral microtubule (PLM) neurites along the anteroposterior axis.</text>
</comment>
<comment type="similarity">
    <text evidence="3">Belongs to the protein kinase superfamily. AGC Ser/Thr protein kinase family.</text>
</comment>
<dbReference type="EC" id="2.7.11.1"/>
<dbReference type="EMBL" id="FO080291">
    <property type="protein sequence ID" value="CCD62663.1"/>
    <property type="molecule type" value="Genomic_DNA"/>
</dbReference>
<dbReference type="EMBL" id="FO080291">
    <property type="protein sequence ID" value="CCD62664.1"/>
    <property type="molecule type" value="Genomic_DNA"/>
</dbReference>
<dbReference type="EMBL" id="AF275634">
    <property type="protein sequence ID" value="AAF91417.1"/>
    <property type="molecule type" value="mRNA"/>
</dbReference>
<dbReference type="EMBL" id="Z34989">
    <property type="protein sequence ID" value="CAA84441.1"/>
    <property type="molecule type" value="mRNA"/>
</dbReference>
<dbReference type="RefSeq" id="NP_001024858.2">
    <molecule id="Q2L6W9-2"/>
    <property type="nucleotide sequence ID" value="NM_001029687.7"/>
</dbReference>
<dbReference type="RefSeq" id="NP_508627.5">
    <molecule id="Q2L6W9-1"/>
    <property type="nucleotide sequence ID" value="NM_076226.5"/>
</dbReference>
<dbReference type="SMR" id="Q2L6W9"/>
<dbReference type="FunCoup" id="Q2L6W9">
    <property type="interactions" value="3171"/>
</dbReference>
<dbReference type="STRING" id="6239.R11G1.4a.1"/>
<dbReference type="PaxDb" id="6239-R11G1.4a"/>
<dbReference type="PeptideAtlas" id="Q2L6W9"/>
<dbReference type="EnsemblMetazoa" id="R11G1.4a.1">
    <molecule id="Q2L6W9-1"/>
    <property type="protein sequence ID" value="R11G1.4a.1"/>
    <property type="gene ID" value="WBGene00004727"/>
</dbReference>
<dbReference type="EnsemblMetazoa" id="R11G1.4b.1">
    <molecule id="Q2L6W9-2"/>
    <property type="protein sequence ID" value="R11G1.4b.1"/>
    <property type="gene ID" value="WBGene00004727"/>
</dbReference>
<dbReference type="GeneID" id="180655"/>
<dbReference type="KEGG" id="cel:CELE_R11G1.4"/>
<dbReference type="UCSC" id="R11G1.4a.1">
    <property type="organism name" value="c. elegans"/>
</dbReference>
<dbReference type="AGR" id="WB:WBGene00004727"/>
<dbReference type="CTD" id="180655"/>
<dbReference type="WormBase" id="R11G1.4a">
    <molecule id="Q2L6W9-1"/>
    <property type="protein sequence ID" value="CE39615"/>
    <property type="gene ID" value="WBGene00004727"/>
    <property type="gene designation" value="sax-1"/>
</dbReference>
<dbReference type="WormBase" id="R11G1.4b">
    <molecule id="Q2L6W9-2"/>
    <property type="protein sequence ID" value="CE39616"/>
    <property type="gene ID" value="WBGene00004727"/>
    <property type="gene designation" value="sax-1"/>
</dbReference>
<dbReference type="eggNOG" id="KOG0605">
    <property type="taxonomic scope" value="Eukaryota"/>
</dbReference>
<dbReference type="GeneTree" id="ENSGT00940000153544"/>
<dbReference type="InParanoid" id="Q2L6W9"/>
<dbReference type="OMA" id="HDNAYYQ"/>
<dbReference type="OrthoDB" id="3638488at2759"/>
<dbReference type="PhylomeDB" id="Q2L6W9"/>
<dbReference type="PRO" id="PR:Q2L6W9"/>
<dbReference type="Proteomes" id="UP000001940">
    <property type="component" value="Chromosome X"/>
</dbReference>
<dbReference type="Bgee" id="WBGene00004727">
    <property type="expression patterns" value="Expressed in pharyngeal muscle cell (C elegans) and 4 other cell types or tissues"/>
</dbReference>
<dbReference type="GO" id="GO:0030424">
    <property type="term" value="C:axon"/>
    <property type="evidence" value="ECO:0000314"/>
    <property type="project" value="WormBase"/>
</dbReference>
<dbReference type="GO" id="GO:0005737">
    <property type="term" value="C:cytoplasm"/>
    <property type="evidence" value="ECO:0000314"/>
    <property type="project" value="WormBase"/>
</dbReference>
<dbReference type="GO" id="GO:0030425">
    <property type="term" value="C:dendrite"/>
    <property type="evidence" value="ECO:0000314"/>
    <property type="project" value="WormBase"/>
</dbReference>
<dbReference type="GO" id="GO:0005634">
    <property type="term" value="C:nucleus"/>
    <property type="evidence" value="ECO:0000314"/>
    <property type="project" value="WormBase"/>
</dbReference>
<dbReference type="GO" id="GO:0005524">
    <property type="term" value="F:ATP binding"/>
    <property type="evidence" value="ECO:0000250"/>
    <property type="project" value="WormBase"/>
</dbReference>
<dbReference type="GO" id="GO:0046872">
    <property type="term" value="F:metal ion binding"/>
    <property type="evidence" value="ECO:0007669"/>
    <property type="project" value="UniProtKB-KW"/>
</dbReference>
<dbReference type="GO" id="GO:0106310">
    <property type="term" value="F:protein serine kinase activity"/>
    <property type="evidence" value="ECO:0007669"/>
    <property type="project" value="RHEA"/>
</dbReference>
<dbReference type="GO" id="GO:0004674">
    <property type="term" value="F:protein serine/threonine kinase activity"/>
    <property type="evidence" value="ECO:0000250"/>
    <property type="project" value="WormBase"/>
</dbReference>
<dbReference type="GO" id="GO:0030031">
    <property type="term" value="P:cell projection assembly"/>
    <property type="evidence" value="ECO:0000315"/>
    <property type="project" value="WormBase"/>
</dbReference>
<dbReference type="GO" id="GO:0007163">
    <property type="term" value="P:establishment or maintenance of cell polarity"/>
    <property type="evidence" value="ECO:0000315"/>
    <property type="project" value="WormBase"/>
</dbReference>
<dbReference type="GO" id="GO:0035556">
    <property type="term" value="P:intracellular signal transduction"/>
    <property type="evidence" value="ECO:0000318"/>
    <property type="project" value="GO_Central"/>
</dbReference>
<dbReference type="GO" id="GO:0030308">
    <property type="term" value="P:negative regulation of cell growth"/>
    <property type="evidence" value="ECO:0000315"/>
    <property type="project" value="WormBase"/>
</dbReference>
<dbReference type="GO" id="GO:0031175">
    <property type="term" value="P:neuron projection development"/>
    <property type="evidence" value="ECO:0000315"/>
    <property type="project" value="WormBase"/>
</dbReference>
<dbReference type="GO" id="GO:0008360">
    <property type="term" value="P:regulation of cell shape"/>
    <property type="evidence" value="ECO:0000315"/>
    <property type="project" value="WormBase"/>
</dbReference>
<dbReference type="CDD" id="cd21775">
    <property type="entry name" value="MobB_NDR-like"/>
    <property type="match status" value="1"/>
</dbReference>
<dbReference type="CDD" id="cd05599">
    <property type="entry name" value="STKc_NDR_like"/>
    <property type="match status" value="1"/>
</dbReference>
<dbReference type="FunFam" id="1.10.510.10:FF:000570">
    <property type="entry name" value="Non-specific serine/threonine protein kinase"/>
    <property type="match status" value="1"/>
</dbReference>
<dbReference type="FunFam" id="3.30.200.20:FF:000118">
    <property type="entry name" value="Non-specific serine/threonine protein kinase"/>
    <property type="match status" value="1"/>
</dbReference>
<dbReference type="Gene3D" id="3.30.200.20">
    <property type="entry name" value="Phosphorylase Kinase, domain 1"/>
    <property type="match status" value="1"/>
</dbReference>
<dbReference type="Gene3D" id="1.10.510.10">
    <property type="entry name" value="Transferase(Phosphotransferase) domain 1"/>
    <property type="match status" value="1"/>
</dbReference>
<dbReference type="InterPro" id="IPR000961">
    <property type="entry name" value="AGC-kinase_C"/>
</dbReference>
<dbReference type="InterPro" id="IPR011009">
    <property type="entry name" value="Kinase-like_dom_sf"/>
</dbReference>
<dbReference type="InterPro" id="IPR017892">
    <property type="entry name" value="Pkinase_C"/>
</dbReference>
<dbReference type="InterPro" id="IPR000719">
    <property type="entry name" value="Prot_kinase_dom"/>
</dbReference>
<dbReference type="InterPro" id="IPR017441">
    <property type="entry name" value="Protein_kinase_ATP_BS"/>
</dbReference>
<dbReference type="InterPro" id="IPR050839">
    <property type="entry name" value="Rho-assoc_Ser/Thr_Kinase"/>
</dbReference>
<dbReference type="InterPro" id="IPR008271">
    <property type="entry name" value="Ser/Thr_kinase_AS"/>
</dbReference>
<dbReference type="PANTHER" id="PTHR22988:SF76">
    <property type="entry name" value="CHROMOSOME UNDETERMINED SCAFFOLD_135, WHOLE GENOME SHOTGUN SEQUENCE"/>
    <property type="match status" value="1"/>
</dbReference>
<dbReference type="PANTHER" id="PTHR22988">
    <property type="entry name" value="MYOTONIC DYSTROPHY S/T KINASE-RELATED"/>
    <property type="match status" value="1"/>
</dbReference>
<dbReference type="Pfam" id="PF00069">
    <property type="entry name" value="Pkinase"/>
    <property type="match status" value="1"/>
</dbReference>
<dbReference type="Pfam" id="PF00433">
    <property type="entry name" value="Pkinase_C"/>
    <property type="match status" value="1"/>
</dbReference>
<dbReference type="SMART" id="SM00133">
    <property type="entry name" value="S_TK_X"/>
    <property type="match status" value="1"/>
</dbReference>
<dbReference type="SMART" id="SM00220">
    <property type="entry name" value="S_TKc"/>
    <property type="match status" value="1"/>
</dbReference>
<dbReference type="SUPFAM" id="SSF56112">
    <property type="entry name" value="Protein kinase-like (PK-like)"/>
    <property type="match status" value="1"/>
</dbReference>
<dbReference type="PROSITE" id="PS51285">
    <property type="entry name" value="AGC_KINASE_CTER"/>
    <property type="match status" value="1"/>
</dbReference>
<dbReference type="PROSITE" id="PS00107">
    <property type="entry name" value="PROTEIN_KINASE_ATP"/>
    <property type="match status" value="1"/>
</dbReference>
<dbReference type="PROSITE" id="PS50011">
    <property type="entry name" value="PROTEIN_KINASE_DOM"/>
    <property type="match status" value="1"/>
</dbReference>
<dbReference type="PROSITE" id="PS00108">
    <property type="entry name" value="PROTEIN_KINASE_ST"/>
    <property type="match status" value="1"/>
</dbReference>